<accession>Q96QR1</accession>
<accession>Q96PL0</accession>
<keyword id="KW-0202">Cytokine</keyword>
<keyword id="KW-0903">Direct protein sequencing</keyword>
<keyword id="KW-1015">Disulfide bond</keyword>
<keyword id="KW-1267">Proteomics identification</keyword>
<keyword id="KW-1185">Reference proteome</keyword>
<keyword id="KW-0964">Secreted</keyword>
<keyword id="KW-0732">Signal</keyword>
<evidence type="ECO:0000250" key="1">
    <source>
        <dbReference type="UniProtKB" id="Q920H1"/>
    </source>
</evidence>
<evidence type="ECO:0000269" key="2">
    <source>
    </source>
</evidence>
<evidence type="ECO:0000269" key="3">
    <source>
    </source>
</evidence>
<evidence type="ECO:0000269" key="4">
    <source>
    </source>
</evidence>
<evidence type="ECO:0000305" key="5"/>
<name>SG3A1_HUMAN</name>
<feature type="signal peptide" evidence="4">
    <location>
        <begin position="1"/>
        <end position="20"/>
    </location>
</feature>
<feature type="chain" id="PRO_0000036383" description="Secretoglobin family 3A member 1">
    <location>
        <begin position="21"/>
        <end position="104"/>
    </location>
</feature>
<feature type="disulfide bond" description="Interchain" evidence="1">
    <location>
        <position position="78"/>
    </location>
</feature>
<feature type="sequence conflict" description="In Ref. 1; AAK82942." evidence="5" ref="1">
    <original>A</original>
    <variation>R</variation>
    <location>
        <position position="19"/>
    </location>
</feature>
<sequence length="104" mass="10100">MKLAALLGLCVALSCSSAAAFLVGSAKPVAQPVAALESAAEAGAGTLANPLGTLNPLKLLLSSLGIPVNHLIEGSQKCVAELGPQAVGAVKALKALLGALTVFG</sequence>
<organism>
    <name type="scientific">Homo sapiens</name>
    <name type="common">Human</name>
    <dbReference type="NCBI Taxonomy" id="9606"/>
    <lineage>
        <taxon>Eukaryota</taxon>
        <taxon>Metazoa</taxon>
        <taxon>Chordata</taxon>
        <taxon>Craniata</taxon>
        <taxon>Vertebrata</taxon>
        <taxon>Euteleostomi</taxon>
        <taxon>Mammalia</taxon>
        <taxon>Eutheria</taxon>
        <taxon>Euarchontoglires</taxon>
        <taxon>Primates</taxon>
        <taxon>Haplorrhini</taxon>
        <taxon>Catarrhini</taxon>
        <taxon>Hominidae</taxon>
        <taxon>Homo</taxon>
    </lineage>
</organism>
<comment type="function">
    <text evidence="2">Secreted cytokine-like protein. Inhibits cell growth in vitro.</text>
</comment>
<comment type="subunit">
    <text evidence="1">Homodimer; disulfide-linked.</text>
</comment>
<comment type="interaction">
    <interactant intactId="EBI-9057632">
        <id>Q96QR1</id>
    </interactant>
    <interactant intactId="EBI-17589229">
        <id>Q6NTF9-3</id>
        <label>RHBDD2</label>
    </interactant>
    <organismsDiffer>false</organismsDiffer>
    <experiments>3</experiments>
</comment>
<comment type="subcellular location">
    <subcellularLocation>
        <location evidence="2">Secreted</location>
    </subcellularLocation>
</comment>
<comment type="tissue specificity">
    <text evidence="2 3">Highly expressed in lung and prostate (PubMed:11481438). Also found in mammary gland, spleen, pancreas, testis and liver (PubMed:11481438). Detected throughout the airway epithelium in lung, with highest expression in large airways (PubMed:12406855). Found in lung submucosal glands where it localizes to acinar and ductile cells (PubMed:12406855). Not detected in respiratory bronchioles, alveolar ducts or alveolar epithelium (PubMed:12406855). In mammary gland, specifically localizes to luminal epithelial cells (PubMed:11481438).</text>
</comment>
<comment type="similarity">
    <text evidence="5">Belongs to the secretoglobin family. UGRP subfamily.</text>
</comment>
<dbReference type="EMBL" id="AY040564">
    <property type="protein sequence ID" value="AAK82942.1"/>
    <property type="molecule type" value="mRNA"/>
</dbReference>
<dbReference type="EMBL" id="AF313458">
    <property type="protein sequence ID" value="AAL26217.1"/>
    <property type="molecule type" value="mRNA"/>
</dbReference>
<dbReference type="EMBL" id="AF436839">
    <property type="protein sequence ID" value="AAQ04481.1"/>
    <property type="molecule type" value="mRNA"/>
</dbReference>
<dbReference type="EMBL" id="AY359064">
    <property type="protein sequence ID" value="AAQ89423.1"/>
    <property type="molecule type" value="mRNA"/>
</dbReference>
<dbReference type="EMBL" id="BC029176">
    <property type="protein sequence ID" value="AAH29176.1"/>
    <property type="molecule type" value="mRNA"/>
</dbReference>
<dbReference type="EMBL" id="BC072673">
    <property type="protein sequence ID" value="AAH72673.1"/>
    <property type="molecule type" value="mRNA"/>
</dbReference>
<dbReference type="CCDS" id="CCDS4456.1"/>
<dbReference type="RefSeq" id="NP_443095.2">
    <property type="nucleotide sequence ID" value="NM_052863.3"/>
</dbReference>
<dbReference type="BioGRID" id="124931">
    <property type="interactions" value="19"/>
</dbReference>
<dbReference type="FunCoup" id="Q96QR1">
    <property type="interactions" value="40"/>
</dbReference>
<dbReference type="IntAct" id="Q96QR1">
    <property type="interactions" value="12"/>
</dbReference>
<dbReference type="MINT" id="Q96QR1"/>
<dbReference type="STRING" id="9606.ENSP00000292641"/>
<dbReference type="GlyCosmos" id="Q96QR1">
    <property type="glycosylation" value="2 sites, 1 glycan"/>
</dbReference>
<dbReference type="GlyGen" id="Q96QR1">
    <property type="glycosylation" value="2 sites, 1 O-linked glycan (2 sites)"/>
</dbReference>
<dbReference type="iPTMnet" id="Q96QR1"/>
<dbReference type="BioMuta" id="SCGB3A1"/>
<dbReference type="DMDM" id="46397901"/>
<dbReference type="MassIVE" id="Q96QR1"/>
<dbReference type="PaxDb" id="9606-ENSP00000292641"/>
<dbReference type="PeptideAtlas" id="Q96QR1"/>
<dbReference type="ProteomicsDB" id="77887"/>
<dbReference type="Antibodypedia" id="29609">
    <property type="antibodies" value="115 antibodies from 20 providers"/>
</dbReference>
<dbReference type="DNASU" id="92304"/>
<dbReference type="Ensembl" id="ENST00000292641.4">
    <property type="protein sequence ID" value="ENSP00000292641.3"/>
    <property type="gene ID" value="ENSG00000161055.4"/>
</dbReference>
<dbReference type="GeneID" id="92304"/>
<dbReference type="KEGG" id="hsa:92304"/>
<dbReference type="MANE-Select" id="ENST00000292641.4">
    <property type="protein sequence ID" value="ENSP00000292641.3"/>
    <property type="RefSeq nucleotide sequence ID" value="NM_052863.3"/>
    <property type="RefSeq protein sequence ID" value="NP_443095.2"/>
</dbReference>
<dbReference type="UCSC" id="uc003mly.4">
    <property type="organism name" value="human"/>
</dbReference>
<dbReference type="AGR" id="HGNC:18384"/>
<dbReference type="CTD" id="92304"/>
<dbReference type="DisGeNET" id="92304"/>
<dbReference type="GeneCards" id="SCGB3A1"/>
<dbReference type="HGNC" id="HGNC:18384">
    <property type="gene designation" value="SCGB3A1"/>
</dbReference>
<dbReference type="HPA" id="ENSG00000161055">
    <property type="expression patterns" value="Group enriched (cervix, lung, salivary gland)"/>
</dbReference>
<dbReference type="MIM" id="606500">
    <property type="type" value="gene"/>
</dbReference>
<dbReference type="neXtProt" id="NX_Q96QR1"/>
<dbReference type="OpenTargets" id="ENSG00000161055"/>
<dbReference type="PharmGKB" id="PA34994"/>
<dbReference type="VEuPathDB" id="HostDB:ENSG00000161055"/>
<dbReference type="eggNOG" id="ENOG502T3N5">
    <property type="taxonomic scope" value="Eukaryota"/>
</dbReference>
<dbReference type="GeneTree" id="ENSGT00420000029848"/>
<dbReference type="HOGENOM" id="CLU_146812_1_0_1"/>
<dbReference type="InParanoid" id="Q96QR1"/>
<dbReference type="OMA" id="MELTATF"/>
<dbReference type="PAN-GO" id="Q96QR1">
    <property type="GO annotations" value="2 GO annotations based on evolutionary models"/>
</dbReference>
<dbReference type="PhylomeDB" id="Q96QR1"/>
<dbReference type="TreeFam" id="TF336928"/>
<dbReference type="PathwayCommons" id="Q96QR1"/>
<dbReference type="SignaLink" id="Q96QR1"/>
<dbReference type="BioGRID-ORCS" id="92304">
    <property type="hits" value="11 hits in 1152 CRISPR screens"/>
</dbReference>
<dbReference type="ChiTaRS" id="SCGB3A1">
    <property type="organism name" value="human"/>
</dbReference>
<dbReference type="GeneWiki" id="SCGB3A1"/>
<dbReference type="GenomeRNAi" id="92304"/>
<dbReference type="Pharos" id="Q96QR1">
    <property type="development level" value="Tbio"/>
</dbReference>
<dbReference type="PRO" id="PR:Q96QR1"/>
<dbReference type="Proteomes" id="UP000005640">
    <property type="component" value="Chromosome 5"/>
</dbReference>
<dbReference type="RNAct" id="Q96QR1">
    <property type="molecule type" value="protein"/>
</dbReference>
<dbReference type="Bgee" id="ENSG00000161055">
    <property type="expression patterns" value="Expressed in trachea and 139 other cell types or tissues"/>
</dbReference>
<dbReference type="GO" id="GO:0070062">
    <property type="term" value="C:extracellular exosome"/>
    <property type="evidence" value="ECO:0007005"/>
    <property type="project" value="UniProtKB"/>
</dbReference>
<dbReference type="GO" id="GO:0005615">
    <property type="term" value="C:extracellular space"/>
    <property type="evidence" value="ECO:0000314"/>
    <property type="project" value="UniProtKB"/>
</dbReference>
<dbReference type="GO" id="GO:0005125">
    <property type="term" value="F:cytokine activity"/>
    <property type="evidence" value="ECO:0000303"/>
    <property type="project" value="UniProtKB"/>
</dbReference>
<dbReference type="GO" id="GO:0030308">
    <property type="term" value="P:negative regulation of cell growth"/>
    <property type="evidence" value="ECO:0000303"/>
    <property type="project" value="UniProtKB"/>
</dbReference>
<dbReference type="GO" id="GO:1901741">
    <property type="term" value="P:positive regulation of myoblast fusion"/>
    <property type="evidence" value="ECO:0000318"/>
    <property type="project" value="GO_Central"/>
</dbReference>
<dbReference type="GO" id="GO:0042127">
    <property type="term" value="P:regulation of cell population proliferation"/>
    <property type="evidence" value="ECO:0000303"/>
    <property type="project" value="UniProtKB"/>
</dbReference>
<dbReference type="InterPro" id="IPR040301">
    <property type="entry name" value="Secretoglobin_3A"/>
</dbReference>
<dbReference type="PANTHER" id="PTHR34829:SF1">
    <property type="entry name" value="SECRETOGLOBIN FAMILY 3A MEMBER 1"/>
    <property type="match status" value="1"/>
</dbReference>
<dbReference type="PANTHER" id="PTHR34829">
    <property type="entry name" value="SECRETOGLOBIN FAMILY 3A MEMBER 2"/>
    <property type="match status" value="1"/>
</dbReference>
<dbReference type="Pfam" id="PF20490">
    <property type="entry name" value="SCGB3A"/>
    <property type="match status" value="1"/>
</dbReference>
<gene>
    <name type="primary">SCGB3A1</name>
    <name type="synonym">HIN1</name>
    <name type="synonym">PNSP2</name>
    <name type="synonym">UGRP2</name>
    <name type="ORF">UNQ629/PRO1245</name>
</gene>
<protein>
    <recommendedName>
        <fullName>Secretoglobin family 3A member 1</fullName>
    </recommendedName>
    <alternativeName>
        <fullName>Cytokine HIN-1</fullName>
    </alternativeName>
    <alternativeName>
        <fullName>High in normal 1</fullName>
    </alternativeName>
    <alternativeName>
        <fullName>Pneumo secretory protein 2</fullName>
        <shortName>PnSP-2</shortName>
    </alternativeName>
    <alternativeName>
        <fullName>Uteroglobin-related protein 2</fullName>
    </alternativeName>
</protein>
<reference key="1">
    <citation type="journal article" date="2001" name="Proc. Natl. Acad. Sci. U.S.A.">
        <title>HIN-1, a putative cytokine highly expressed in normal but not cancerous mammary epithelial cells.</title>
        <authorList>
            <person name="Krop I.E."/>
            <person name="Sgroi D."/>
            <person name="Porter D.A."/>
            <person name="Lunetta K.L."/>
            <person name="LeVangie R."/>
            <person name="Seth P."/>
            <person name="Kaelin C.M."/>
            <person name="Rhei E."/>
            <person name="Bosenberg M."/>
            <person name="Schnitt S."/>
            <person name="Marks J.R."/>
            <person name="Pagon Z."/>
            <person name="Belina D."/>
            <person name="Razumovic J."/>
            <person name="Polyak K."/>
        </authorList>
    </citation>
    <scope>NUCLEOTIDE SEQUENCE [MRNA]</scope>
    <scope>FUNCTION</scope>
    <scope>SUBCELLULAR LOCATION</scope>
    <scope>TISSUE SPECIFICITY</scope>
</reference>
<reference key="2">
    <citation type="journal article" date="2001" name="Mol. Endocrinol.">
        <title>UGRP1, a uteroglobin/Clara cell secretory protein-related protein, is a novel lung-enriched downstream target gene for the T/EBP/NKX2.1 homeodomain transcription factor.</title>
        <authorList>
            <person name="Niimi T."/>
            <person name="Keck-Waggoner C.L."/>
            <person name="Popescu N.C."/>
            <person name="Zhou Y."/>
            <person name="Levitt R.C."/>
            <person name="Kimura S."/>
        </authorList>
    </citation>
    <scope>NUCLEOTIDE SEQUENCE [MRNA]</scope>
</reference>
<reference key="3">
    <citation type="submission" date="2001-10" db="EMBL/GenBank/DDBJ databases">
        <title>Molecular cloning of PnSP-1, a protein of the respiratory tract with potential association to atopy.</title>
        <authorList>
            <person name="Clippe A."/>
            <person name="Laing I.A."/>
            <person name="LeSouef P.N."/>
            <person name="Bernard A."/>
            <person name="Knoops B."/>
        </authorList>
    </citation>
    <scope>NUCLEOTIDE SEQUENCE [MRNA]</scope>
</reference>
<reference key="4">
    <citation type="journal article" date="2003" name="Genome Res.">
        <title>The secreted protein discovery initiative (SPDI), a large-scale effort to identify novel human secreted and transmembrane proteins: a bioinformatics assessment.</title>
        <authorList>
            <person name="Clark H.F."/>
            <person name="Gurney A.L."/>
            <person name="Abaya E."/>
            <person name="Baker K."/>
            <person name="Baldwin D.T."/>
            <person name="Brush J."/>
            <person name="Chen J."/>
            <person name="Chow B."/>
            <person name="Chui C."/>
            <person name="Crowley C."/>
            <person name="Currell B."/>
            <person name="Deuel B."/>
            <person name="Dowd P."/>
            <person name="Eaton D."/>
            <person name="Foster J.S."/>
            <person name="Grimaldi C."/>
            <person name="Gu Q."/>
            <person name="Hass P.E."/>
            <person name="Heldens S."/>
            <person name="Huang A."/>
            <person name="Kim H.S."/>
            <person name="Klimowski L."/>
            <person name="Jin Y."/>
            <person name="Johnson S."/>
            <person name="Lee J."/>
            <person name="Lewis L."/>
            <person name="Liao D."/>
            <person name="Mark M.R."/>
            <person name="Robbie E."/>
            <person name="Sanchez C."/>
            <person name="Schoenfeld J."/>
            <person name="Seshagiri S."/>
            <person name="Simmons L."/>
            <person name="Singh J."/>
            <person name="Smith V."/>
            <person name="Stinson J."/>
            <person name="Vagts A."/>
            <person name="Vandlen R.L."/>
            <person name="Watanabe C."/>
            <person name="Wieand D."/>
            <person name="Woods K."/>
            <person name="Xie M.-H."/>
            <person name="Yansura D.G."/>
            <person name="Yi S."/>
            <person name="Yu G."/>
            <person name="Yuan J."/>
            <person name="Zhang M."/>
            <person name="Zhang Z."/>
            <person name="Goddard A.D."/>
            <person name="Wood W.I."/>
            <person name="Godowski P.J."/>
            <person name="Gray A.M."/>
        </authorList>
    </citation>
    <scope>NUCLEOTIDE SEQUENCE [LARGE SCALE MRNA]</scope>
</reference>
<reference key="5">
    <citation type="journal article" date="2004" name="Genome Res.">
        <title>The status, quality, and expansion of the NIH full-length cDNA project: the Mammalian Gene Collection (MGC).</title>
        <authorList>
            <consortium name="The MGC Project Team"/>
        </authorList>
    </citation>
    <scope>NUCLEOTIDE SEQUENCE [LARGE SCALE MRNA]</scope>
    <source>
        <tissue>Brain</tissue>
    </source>
</reference>
<reference key="6">
    <citation type="journal article" date="2004" name="Protein Sci.">
        <title>Signal peptide prediction based on analysis of experimentally verified cleavage sites.</title>
        <authorList>
            <person name="Zhang Z."/>
            <person name="Henzel W.J."/>
        </authorList>
    </citation>
    <scope>PROTEIN SEQUENCE OF 21-35</scope>
</reference>
<reference key="7">
    <citation type="journal article" date="2002" name="Am. J. Respir. Crit. Care Med.">
        <title>Secretoglobins SCGB3A1 and SCGB3A2 define secretory cell subsets in mouse and human airways.</title>
        <authorList>
            <person name="Reynolds S.D."/>
            <person name="Reynolds P.R."/>
            <person name="Pryhuber G.S."/>
            <person name="Finder J.D."/>
            <person name="Stripp B.R."/>
        </authorList>
    </citation>
    <scope>TISSUE SPECIFICITY</scope>
</reference>
<proteinExistence type="evidence at protein level"/>